<accession>Q2LVR8</accession>
<keyword id="KW-0997">Cell inner membrane</keyword>
<keyword id="KW-1003">Cell membrane</keyword>
<keyword id="KW-0963">Cytoplasm</keyword>
<keyword id="KW-0342">GTP-binding</keyword>
<keyword id="KW-0472">Membrane</keyword>
<keyword id="KW-0547">Nucleotide-binding</keyword>
<keyword id="KW-1185">Reference proteome</keyword>
<keyword id="KW-0690">Ribosome biogenesis</keyword>
<keyword id="KW-0694">RNA-binding</keyword>
<keyword id="KW-0699">rRNA-binding</keyword>
<comment type="function">
    <text evidence="1">An essential GTPase that binds both GDP and GTP, with rapid nucleotide exchange. Plays a role in 16S rRNA processing and 30S ribosomal subunit biogenesis and possibly also in cell cycle regulation and energy metabolism.</text>
</comment>
<comment type="subunit">
    <text evidence="1">Monomer.</text>
</comment>
<comment type="subcellular location">
    <subcellularLocation>
        <location>Cytoplasm</location>
    </subcellularLocation>
    <subcellularLocation>
        <location evidence="1">Cell inner membrane</location>
        <topology evidence="1">Peripheral membrane protein</topology>
    </subcellularLocation>
</comment>
<comment type="similarity">
    <text evidence="1 2">Belongs to the TRAFAC class TrmE-Era-EngA-EngB-Septin-like GTPase superfamily. Era GTPase family.</text>
</comment>
<gene>
    <name evidence="1" type="primary">era</name>
    <name type="ordered locus">SYNAS_23010</name>
    <name type="ORF">SYN_00792</name>
</gene>
<sequence length="306" mass="34548">MDRKSSGGCSIMFKSGFIGIIGRPNVGKSTLLNGILGEKLAIITHKPQTTRNRIMGIRNADNAQFIFVDTPGIHSASTPLNRLMVRTATETFTDSDILLLVVEAGQAVHPEDLPIIESLKESGTISFLILNKIDLIRKEQLLPLMDAYRNLHSFAELIPISALTGEGIPLLLDELWKYLPEGPQYFPDDMMTDQSERFLAAEIIREKILLLTHKEIPYSSAVVVDAFKEDEARNLIRISATINVEKESQKGIIIGKKGTMLKEIGTRARVDMEKFFATRIFLELFVRVRKDWTKDPRMLREFGYNE</sequence>
<reference key="1">
    <citation type="journal article" date="2007" name="Proc. Natl. Acad. Sci. U.S.A.">
        <title>The genome of Syntrophus aciditrophicus: life at the thermodynamic limit of microbial growth.</title>
        <authorList>
            <person name="McInerney M.J."/>
            <person name="Rohlin L."/>
            <person name="Mouttaki H."/>
            <person name="Kim U."/>
            <person name="Krupp R.S."/>
            <person name="Rios-Hernandez L."/>
            <person name="Sieber J."/>
            <person name="Struchtemeyer C.G."/>
            <person name="Bhattacharyya A."/>
            <person name="Campbell J.W."/>
            <person name="Gunsalus R.P."/>
        </authorList>
    </citation>
    <scope>NUCLEOTIDE SEQUENCE [LARGE SCALE GENOMIC DNA]</scope>
    <source>
        <strain>SB</strain>
    </source>
</reference>
<organism>
    <name type="scientific">Syntrophus aciditrophicus (strain SB)</name>
    <dbReference type="NCBI Taxonomy" id="56780"/>
    <lineage>
        <taxon>Bacteria</taxon>
        <taxon>Pseudomonadati</taxon>
        <taxon>Thermodesulfobacteriota</taxon>
        <taxon>Syntrophia</taxon>
        <taxon>Syntrophales</taxon>
        <taxon>Syntrophaceae</taxon>
        <taxon>Syntrophus</taxon>
    </lineage>
</organism>
<dbReference type="EMBL" id="CP000252">
    <property type="protein sequence ID" value="ABC78180.1"/>
    <property type="molecule type" value="Genomic_DNA"/>
</dbReference>
<dbReference type="SMR" id="Q2LVR8"/>
<dbReference type="FunCoup" id="Q2LVR8">
    <property type="interactions" value="456"/>
</dbReference>
<dbReference type="STRING" id="56780.SYN_00792"/>
<dbReference type="KEGG" id="sat:SYN_00792"/>
<dbReference type="eggNOG" id="COG1159">
    <property type="taxonomic scope" value="Bacteria"/>
</dbReference>
<dbReference type="HOGENOM" id="CLU_038009_1_0_7"/>
<dbReference type="InParanoid" id="Q2LVR8"/>
<dbReference type="OrthoDB" id="9805918at2"/>
<dbReference type="Proteomes" id="UP000001933">
    <property type="component" value="Chromosome"/>
</dbReference>
<dbReference type="GO" id="GO:0005829">
    <property type="term" value="C:cytosol"/>
    <property type="evidence" value="ECO:0007669"/>
    <property type="project" value="TreeGrafter"/>
</dbReference>
<dbReference type="GO" id="GO:0005886">
    <property type="term" value="C:plasma membrane"/>
    <property type="evidence" value="ECO:0007669"/>
    <property type="project" value="UniProtKB-SubCell"/>
</dbReference>
<dbReference type="GO" id="GO:0005525">
    <property type="term" value="F:GTP binding"/>
    <property type="evidence" value="ECO:0007669"/>
    <property type="project" value="UniProtKB-UniRule"/>
</dbReference>
<dbReference type="GO" id="GO:0003924">
    <property type="term" value="F:GTPase activity"/>
    <property type="evidence" value="ECO:0007669"/>
    <property type="project" value="UniProtKB-UniRule"/>
</dbReference>
<dbReference type="GO" id="GO:0043024">
    <property type="term" value="F:ribosomal small subunit binding"/>
    <property type="evidence" value="ECO:0007669"/>
    <property type="project" value="TreeGrafter"/>
</dbReference>
<dbReference type="GO" id="GO:0070181">
    <property type="term" value="F:small ribosomal subunit rRNA binding"/>
    <property type="evidence" value="ECO:0007669"/>
    <property type="project" value="UniProtKB-UniRule"/>
</dbReference>
<dbReference type="GO" id="GO:0000028">
    <property type="term" value="P:ribosomal small subunit assembly"/>
    <property type="evidence" value="ECO:0007669"/>
    <property type="project" value="TreeGrafter"/>
</dbReference>
<dbReference type="CDD" id="cd04163">
    <property type="entry name" value="Era"/>
    <property type="match status" value="1"/>
</dbReference>
<dbReference type="CDD" id="cd22534">
    <property type="entry name" value="KH-II_Era"/>
    <property type="match status" value="1"/>
</dbReference>
<dbReference type="FunFam" id="3.30.300.20:FF:000003">
    <property type="entry name" value="GTPase Era"/>
    <property type="match status" value="1"/>
</dbReference>
<dbReference type="FunFam" id="3.40.50.300:FF:000094">
    <property type="entry name" value="GTPase Era"/>
    <property type="match status" value="1"/>
</dbReference>
<dbReference type="Gene3D" id="3.30.300.20">
    <property type="match status" value="1"/>
</dbReference>
<dbReference type="Gene3D" id="3.40.50.300">
    <property type="entry name" value="P-loop containing nucleotide triphosphate hydrolases"/>
    <property type="match status" value="1"/>
</dbReference>
<dbReference type="HAMAP" id="MF_00367">
    <property type="entry name" value="GTPase_Era"/>
    <property type="match status" value="1"/>
</dbReference>
<dbReference type="InterPro" id="IPR030388">
    <property type="entry name" value="G_ERA_dom"/>
</dbReference>
<dbReference type="InterPro" id="IPR006073">
    <property type="entry name" value="GTP-bd"/>
</dbReference>
<dbReference type="InterPro" id="IPR005662">
    <property type="entry name" value="GTPase_Era-like"/>
</dbReference>
<dbReference type="InterPro" id="IPR015946">
    <property type="entry name" value="KH_dom-like_a/b"/>
</dbReference>
<dbReference type="InterPro" id="IPR004044">
    <property type="entry name" value="KH_dom_type_2"/>
</dbReference>
<dbReference type="InterPro" id="IPR009019">
    <property type="entry name" value="KH_sf_prok-type"/>
</dbReference>
<dbReference type="InterPro" id="IPR027417">
    <property type="entry name" value="P-loop_NTPase"/>
</dbReference>
<dbReference type="InterPro" id="IPR005225">
    <property type="entry name" value="Small_GTP-bd"/>
</dbReference>
<dbReference type="NCBIfam" id="TIGR00436">
    <property type="entry name" value="era"/>
    <property type="match status" value="1"/>
</dbReference>
<dbReference type="NCBIfam" id="NF000908">
    <property type="entry name" value="PRK00089.1"/>
    <property type="match status" value="1"/>
</dbReference>
<dbReference type="NCBIfam" id="TIGR00231">
    <property type="entry name" value="small_GTP"/>
    <property type="match status" value="1"/>
</dbReference>
<dbReference type="PANTHER" id="PTHR42698">
    <property type="entry name" value="GTPASE ERA"/>
    <property type="match status" value="1"/>
</dbReference>
<dbReference type="PANTHER" id="PTHR42698:SF1">
    <property type="entry name" value="GTPASE ERA, MITOCHONDRIAL"/>
    <property type="match status" value="1"/>
</dbReference>
<dbReference type="Pfam" id="PF07650">
    <property type="entry name" value="KH_2"/>
    <property type="match status" value="1"/>
</dbReference>
<dbReference type="Pfam" id="PF01926">
    <property type="entry name" value="MMR_HSR1"/>
    <property type="match status" value="1"/>
</dbReference>
<dbReference type="SUPFAM" id="SSF52540">
    <property type="entry name" value="P-loop containing nucleoside triphosphate hydrolases"/>
    <property type="match status" value="1"/>
</dbReference>
<dbReference type="SUPFAM" id="SSF54814">
    <property type="entry name" value="Prokaryotic type KH domain (KH-domain type II)"/>
    <property type="match status" value="1"/>
</dbReference>
<dbReference type="PROSITE" id="PS51713">
    <property type="entry name" value="G_ERA"/>
    <property type="match status" value="1"/>
</dbReference>
<dbReference type="PROSITE" id="PS50823">
    <property type="entry name" value="KH_TYPE_2"/>
    <property type="match status" value="1"/>
</dbReference>
<evidence type="ECO:0000255" key="1">
    <source>
        <dbReference type="HAMAP-Rule" id="MF_00367"/>
    </source>
</evidence>
<evidence type="ECO:0000255" key="2">
    <source>
        <dbReference type="PROSITE-ProRule" id="PRU01050"/>
    </source>
</evidence>
<protein>
    <recommendedName>
        <fullName evidence="1">GTPase Era</fullName>
    </recommendedName>
</protein>
<name>ERA_SYNAS</name>
<proteinExistence type="inferred from homology"/>
<feature type="chain" id="PRO_1000079760" description="GTPase Era">
    <location>
        <begin position="1"/>
        <end position="306"/>
    </location>
</feature>
<feature type="domain" description="Era-type G" evidence="2">
    <location>
        <begin position="14"/>
        <end position="181"/>
    </location>
</feature>
<feature type="domain" description="KH type-2" evidence="1">
    <location>
        <begin position="212"/>
        <end position="290"/>
    </location>
</feature>
<feature type="region of interest" description="G1" evidence="2">
    <location>
        <begin position="22"/>
        <end position="29"/>
    </location>
</feature>
<feature type="region of interest" description="G2" evidence="2">
    <location>
        <begin position="48"/>
        <end position="52"/>
    </location>
</feature>
<feature type="region of interest" description="G3" evidence="2">
    <location>
        <begin position="69"/>
        <end position="72"/>
    </location>
</feature>
<feature type="region of interest" description="G4" evidence="2">
    <location>
        <begin position="131"/>
        <end position="134"/>
    </location>
</feature>
<feature type="region of interest" description="G5" evidence="2">
    <location>
        <begin position="160"/>
        <end position="162"/>
    </location>
</feature>
<feature type="binding site" evidence="1">
    <location>
        <begin position="22"/>
        <end position="29"/>
    </location>
    <ligand>
        <name>GTP</name>
        <dbReference type="ChEBI" id="CHEBI:37565"/>
    </ligand>
</feature>
<feature type="binding site" evidence="1">
    <location>
        <begin position="69"/>
        <end position="73"/>
    </location>
    <ligand>
        <name>GTP</name>
        <dbReference type="ChEBI" id="CHEBI:37565"/>
    </ligand>
</feature>
<feature type="binding site" evidence="1">
    <location>
        <begin position="131"/>
        <end position="134"/>
    </location>
    <ligand>
        <name>GTP</name>
        <dbReference type="ChEBI" id="CHEBI:37565"/>
    </ligand>
</feature>